<protein>
    <recommendedName>
        <fullName evidence="1">Transcription antitermination protein NusB</fullName>
    </recommendedName>
    <alternativeName>
        <fullName evidence="1">Antitermination factor NusB</fullName>
    </alternativeName>
</protein>
<evidence type="ECO:0000255" key="1">
    <source>
        <dbReference type="HAMAP-Rule" id="MF_00073"/>
    </source>
</evidence>
<evidence type="ECO:0000256" key="2">
    <source>
        <dbReference type="SAM" id="MobiDB-lite"/>
    </source>
</evidence>
<accession>Q6NH08</accession>
<name>NUSB_CORDI</name>
<comment type="function">
    <text evidence="1">Involved in transcription antitermination. Required for transcription of ribosomal RNA (rRNA) genes. Binds specifically to the boxA antiterminator sequence of the ribosomal RNA (rrn) operons.</text>
</comment>
<comment type="similarity">
    <text evidence="1">Belongs to the NusB family.</text>
</comment>
<gene>
    <name evidence="1" type="primary">nusB</name>
    <name type="ordered locus">DIP1339</name>
</gene>
<keyword id="KW-1185">Reference proteome</keyword>
<keyword id="KW-0694">RNA-binding</keyword>
<keyword id="KW-0804">Transcription</keyword>
<keyword id="KW-0889">Transcription antitermination</keyword>
<keyword id="KW-0805">Transcription regulation</keyword>
<proteinExistence type="inferred from homology"/>
<organism>
    <name type="scientific">Corynebacterium diphtheriae (strain ATCC 700971 / NCTC 13129 / Biotype gravis)</name>
    <dbReference type="NCBI Taxonomy" id="257309"/>
    <lineage>
        <taxon>Bacteria</taxon>
        <taxon>Bacillati</taxon>
        <taxon>Actinomycetota</taxon>
        <taxon>Actinomycetes</taxon>
        <taxon>Mycobacteriales</taxon>
        <taxon>Corynebacteriaceae</taxon>
        <taxon>Corynebacterium</taxon>
    </lineage>
</organism>
<sequence>MKSQETRSSWKRRGSRYKARRRAVDILFEAEMRDIDPVAIVEDRVVLSRLNGTDVNQVPSYTKEIVSGAAMELDRLDELIAAHLAEDWSLERIMTVDRAILRVSVWELIFNPDVPLATAIIEGVELASEYSTDVSPAYVHALLDSIAKNIDEYRAGSVTPVENSEAEAAGYPVEESIEEDSQ</sequence>
<dbReference type="EMBL" id="BX248357">
    <property type="protein sequence ID" value="CAE49867.1"/>
    <property type="molecule type" value="Genomic_DNA"/>
</dbReference>
<dbReference type="SMR" id="Q6NH08"/>
<dbReference type="STRING" id="257309.DIP1339"/>
<dbReference type="KEGG" id="cdi:DIP1339"/>
<dbReference type="HOGENOM" id="CLU_087843_2_0_11"/>
<dbReference type="Proteomes" id="UP000002198">
    <property type="component" value="Chromosome"/>
</dbReference>
<dbReference type="GO" id="GO:0005829">
    <property type="term" value="C:cytosol"/>
    <property type="evidence" value="ECO:0007669"/>
    <property type="project" value="TreeGrafter"/>
</dbReference>
<dbReference type="GO" id="GO:0003723">
    <property type="term" value="F:RNA binding"/>
    <property type="evidence" value="ECO:0007669"/>
    <property type="project" value="UniProtKB-UniRule"/>
</dbReference>
<dbReference type="GO" id="GO:0006353">
    <property type="term" value="P:DNA-templated transcription termination"/>
    <property type="evidence" value="ECO:0007669"/>
    <property type="project" value="UniProtKB-UniRule"/>
</dbReference>
<dbReference type="GO" id="GO:0031564">
    <property type="term" value="P:transcription antitermination"/>
    <property type="evidence" value="ECO:0007669"/>
    <property type="project" value="UniProtKB-KW"/>
</dbReference>
<dbReference type="Gene3D" id="1.10.940.10">
    <property type="entry name" value="NusB-like"/>
    <property type="match status" value="1"/>
</dbReference>
<dbReference type="HAMAP" id="MF_00073">
    <property type="entry name" value="NusB"/>
    <property type="match status" value="1"/>
</dbReference>
<dbReference type="InterPro" id="IPR035926">
    <property type="entry name" value="NusB-like_sf"/>
</dbReference>
<dbReference type="InterPro" id="IPR011605">
    <property type="entry name" value="NusB_fam"/>
</dbReference>
<dbReference type="InterPro" id="IPR006027">
    <property type="entry name" value="NusB_RsmB_TIM44"/>
</dbReference>
<dbReference type="NCBIfam" id="TIGR01951">
    <property type="entry name" value="nusB"/>
    <property type="match status" value="1"/>
</dbReference>
<dbReference type="PANTHER" id="PTHR11078:SF3">
    <property type="entry name" value="ANTITERMINATION NUSB DOMAIN-CONTAINING PROTEIN"/>
    <property type="match status" value="1"/>
</dbReference>
<dbReference type="PANTHER" id="PTHR11078">
    <property type="entry name" value="N UTILIZATION SUBSTANCE PROTEIN B-RELATED"/>
    <property type="match status" value="1"/>
</dbReference>
<dbReference type="Pfam" id="PF01029">
    <property type="entry name" value="NusB"/>
    <property type="match status" value="1"/>
</dbReference>
<dbReference type="SUPFAM" id="SSF48013">
    <property type="entry name" value="NusB-like"/>
    <property type="match status" value="1"/>
</dbReference>
<feature type="chain" id="PRO_0000265509" description="Transcription antitermination protein NusB">
    <location>
        <begin position="1"/>
        <end position="182"/>
    </location>
</feature>
<feature type="region of interest" description="Disordered" evidence="2">
    <location>
        <begin position="159"/>
        <end position="182"/>
    </location>
</feature>
<reference key="1">
    <citation type="journal article" date="2003" name="Nucleic Acids Res.">
        <title>The complete genome sequence and analysis of Corynebacterium diphtheriae NCTC13129.</title>
        <authorList>
            <person name="Cerdeno-Tarraga A.-M."/>
            <person name="Efstratiou A."/>
            <person name="Dover L.G."/>
            <person name="Holden M.T.G."/>
            <person name="Pallen M.J."/>
            <person name="Bentley S.D."/>
            <person name="Besra G.S."/>
            <person name="Churcher C.M."/>
            <person name="James K.D."/>
            <person name="De Zoysa A."/>
            <person name="Chillingworth T."/>
            <person name="Cronin A."/>
            <person name="Dowd L."/>
            <person name="Feltwell T."/>
            <person name="Hamlin N."/>
            <person name="Holroyd S."/>
            <person name="Jagels K."/>
            <person name="Moule S."/>
            <person name="Quail M.A."/>
            <person name="Rabbinowitsch E."/>
            <person name="Rutherford K.M."/>
            <person name="Thomson N.R."/>
            <person name="Unwin L."/>
            <person name="Whitehead S."/>
            <person name="Barrell B.G."/>
            <person name="Parkhill J."/>
        </authorList>
    </citation>
    <scope>NUCLEOTIDE SEQUENCE [LARGE SCALE GENOMIC DNA]</scope>
    <source>
        <strain>ATCC 700971 / NCTC 13129 / Biotype gravis</strain>
    </source>
</reference>